<comment type="function">
    <text evidence="1">Catalyzes a trans-dehydration via an enolate intermediate.</text>
</comment>
<comment type="catalytic activity">
    <reaction evidence="1">
        <text>3-dehydroquinate = 3-dehydroshikimate + H2O</text>
        <dbReference type="Rhea" id="RHEA:21096"/>
        <dbReference type="ChEBI" id="CHEBI:15377"/>
        <dbReference type="ChEBI" id="CHEBI:16630"/>
        <dbReference type="ChEBI" id="CHEBI:32364"/>
        <dbReference type="EC" id="4.2.1.10"/>
    </reaction>
</comment>
<comment type="pathway">
    <text evidence="1">Metabolic intermediate biosynthesis; chorismate biosynthesis; chorismate from D-erythrose 4-phosphate and phosphoenolpyruvate: step 3/7.</text>
</comment>
<comment type="subunit">
    <text evidence="1">Homododecamer.</text>
</comment>
<comment type="similarity">
    <text evidence="1">Belongs to the type-II 3-dehydroquinase family.</text>
</comment>
<reference key="1">
    <citation type="journal article" date="2012" name="BMC Microbiol.">
        <title>Genome sequence of Desulfitobacterium hafniense DCB-2, a Gram-positive anaerobe capable of dehalogenation and metal reduction.</title>
        <authorList>
            <person name="Kim S.H."/>
            <person name="Harzman C."/>
            <person name="Davis J.K."/>
            <person name="Hutcheson R."/>
            <person name="Broderick J.B."/>
            <person name="Marsh T.L."/>
            <person name="Tiedje J.M."/>
        </authorList>
    </citation>
    <scope>NUCLEOTIDE SEQUENCE [LARGE SCALE GENOMIC DNA]</scope>
    <source>
        <strain>DSM 10664 / DCB-2</strain>
    </source>
</reference>
<evidence type="ECO:0000255" key="1">
    <source>
        <dbReference type="HAMAP-Rule" id="MF_00169"/>
    </source>
</evidence>
<protein>
    <recommendedName>
        <fullName evidence="1">3-dehydroquinate dehydratase</fullName>
        <shortName evidence="1">3-dehydroquinase</shortName>
        <ecNumber evidence="1">4.2.1.10</ecNumber>
    </recommendedName>
    <alternativeName>
        <fullName evidence="1">Type II DHQase</fullName>
    </alternativeName>
</protein>
<name>AROQ_DESHD</name>
<sequence>MGKIWVLHGPNLNLLGRREPDKYGTQTLDEINNELLHKAYTAGIPIQVEQTNFEGELIQWIHSMGPDDFLIINPGAWTHYSYAVRDAITSVQVPAIEVHLSNIHAREEFRKTSVIAPVCCGQISGLGGKSYSLALDYALEALTQK</sequence>
<proteinExistence type="inferred from homology"/>
<gene>
    <name evidence="1" type="primary">aroQ</name>
    <name type="ordered locus">Dhaf_3520</name>
</gene>
<accession>B8FQ77</accession>
<feature type="chain" id="PRO_1000123688" description="3-dehydroquinate dehydratase">
    <location>
        <begin position="1"/>
        <end position="145"/>
    </location>
</feature>
<feature type="active site" description="Proton acceptor" evidence="1">
    <location>
        <position position="23"/>
    </location>
</feature>
<feature type="active site" description="Proton donor" evidence="1">
    <location>
        <position position="99"/>
    </location>
</feature>
<feature type="binding site" evidence="1">
    <location>
        <position position="73"/>
    </location>
    <ligand>
        <name>substrate</name>
    </ligand>
</feature>
<feature type="binding site" evidence="1">
    <location>
        <position position="79"/>
    </location>
    <ligand>
        <name>substrate</name>
    </ligand>
</feature>
<feature type="binding site" evidence="1">
    <location>
        <position position="86"/>
    </location>
    <ligand>
        <name>substrate</name>
    </ligand>
</feature>
<feature type="binding site" evidence="1">
    <location>
        <begin position="100"/>
        <end position="101"/>
    </location>
    <ligand>
        <name>substrate</name>
    </ligand>
</feature>
<feature type="binding site" evidence="1">
    <location>
        <position position="110"/>
    </location>
    <ligand>
        <name>substrate</name>
    </ligand>
</feature>
<feature type="site" description="Transition state stabilizer" evidence="1">
    <location>
        <position position="18"/>
    </location>
</feature>
<keyword id="KW-0028">Amino-acid biosynthesis</keyword>
<keyword id="KW-0057">Aromatic amino acid biosynthesis</keyword>
<keyword id="KW-0456">Lyase</keyword>
<dbReference type="EC" id="4.2.1.10" evidence="1"/>
<dbReference type="EMBL" id="CP001336">
    <property type="protein sequence ID" value="ACL21538.1"/>
    <property type="molecule type" value="Genomic_DNA"/>
</dbReference>
<dbReference type="RefSeq" id="WP_015944634.1">
    <property type="nucleotide sequence ID" value="NC_011830.1"/>
</dbReference>
<dbReference type="SMR" id="B8FQ77"/>
<dbReference type="KEGG" id="dhd:Dhaf_3520"/>
<dbReference type="HOGENOM" id="CLU_090968_3_0_9"/>
<dbReference type="UniPathway" id="UPA00053">
    <property type="reaction ID" value="UER00086"/>
</dbReference>
<dbReference type="Proteomes" id="UP000007726">
    <property type="component" value="Chromosome"/>
</dbReference>
<dbReference type="GO" id="GO:0003855">
    <property type="term" value="F:3-dehydroquinate dehydratase activity"/>
    <property type="evidence" value="ECO:0007669"/>
    <property type="project" value="UniProtKB-UniRule"/>
</dbReference>
<dbReference type="GO" id="GO:0008652">
    <property type="term" value="P:amino acid biosynthetic process"/>
    <property type="evidence" value="ECO:0007669"/>
    <property type="project" value="UniProtKB-KW"/>
</dbReference>
<dbReference type="GO" id="GO:0009073">
    <property type="term" value="P:aromatic amino acid family biosynthetic process"/>
    <property type="evidence" value="ECO:0007669"/>
    <property type="project" value="UniProtKB-KW"/>
</dbReference>
<dbReference type="GO" id="GO:0009423">
    <property type="term" value="P:chorismate biosynthetic process"/>
    <property type="evidence" value="ECO:0007669"/>
    <property type="project" value="UniProtKB-UniRule"/>
</dbReference>
<dbReference type="GO" id="GO:0019631">
    <property type="term" value="P:quinate catabolic process"/>
    <property type="evidence" value="ECO:0007669"/>
    <property type="project" value="TreeGrafter"/>
</dbReference>
<dbReference type="CDD" id="cd00466">
    <property type="entry name" value="DHQase_II"/>
    <property type="match status" value="1"/>
</dbReference>
<dbReference type="Gene3D" id="3.40.50.9100">
    <property type="entry name" value="Dehydroquinase, class II"/>
    <property type="match status" value="1"/>
</dbReference>
<dbReference type="HAMAP" id="MF_00169">
    <property type="entry name" value="AroQ"/>
    <property type="match status" value="1"/>
</dbReference>
<dbReference type="InterPro" id="IPR001874">
    <property type="entry name" value="DHquinase_II"/>
</dbReference>
<dbReference type="InterPro" id="IPR018509">
    <property type="entry name" value="DHquinase_II_CS"/>
</dbReference>
<dbReference type="InterPro" id="IPR036441">
    <property type="entry name" value="DHquinase_II_sf"/>
</dbReference>
<dbReference type="NCBIfam" id="TIGR01088">
    <property type="entry name" value="aroQ"/>
    <property type="match status" value="1"/>
</dbReference>
<dbReference type="NCBIfam" id="NF003805">
    <property type="entry name" value="PRK05395.1-2"/>
    <property type="match status" value="1"/>
</dbReference>
<dbReference type="NCBIfam" id="NF003806">
    <property type="entry name" value="PRK05395.1-3"/>
    <property type="match status" value="1"/>
</dbReference>
<dbReference type="NCBIfam" id="NF003807">
    <property type="entry name" value="PRK05395.1-4"/>
    <property type="match status" value="1"/>
</dbReference>
<dbReference type="PANTHER" id="PTHR21272">
    <property type="entry name" value="CATABOLIC 3-DEHYDROQUINASE"/>
    <property type="match status" value="1"/>
</dbReference>
<dbReference type="PANTHER" id="PTHR21272:SF3">
    <property type="entry name" value="CATABOLIC 3-DEHYDROQUINASE"/>
    <property type="match status" value="1"/>
</dbReference>
<dbReference type="Pfam" id="PF01220">
    <property type="entry name" value="DHquinase_II"/>
    <property type="match status" value="1"/>
</dbReference>
<dbReference type="PIRSF" id="PIRSF001399">
    <property type="entry name" value="DHquinase_II"/>
    <property type="match status" value="1"/>
</dbReference>
<dbReference type="SUPFAM" id="SSF52304">
    <property type="entry name" value="Type II 3-dehydroquinate dehydratase"/>
    <property type="match status" value="1"/>
</dbReference>
<dbReference type="PROSITE" id="PS01029">
    <property type="entry name" value="DEHYDROQUINASE_II"/>
    <property type="match status" value="1"/>
</dbReference>
<organism>
    <name type="scientific">Desulfitobacterium hafniense (strain DSM 10664 / DCB-2)</name>
    <dbReference type="NCBI Taxonomy" id="272564"/>
    <lineage>
        <taxon>Bacteria</taxon>
        <taxon>Bacillati</taxon>
        <taxon>Bacillota</taxon>
        <taxon>Clostridia</taxon>
        <taxon>Eubacteriales</taxon>
        <taxon>Desulfitobacteriaceae</taxon>
        <taxon>Desulfitobacterium</taxon>
    </lineage>
</organism>